<reference key="1">
    <citation type="journal article" date="2008" name="PLoS Genet.">
        <title>Genomic islands in the pathogenic filamentous fungus Aspergillus fumigatus.</title>
        <authorList>
            <person name="Fedorova N.D."/>
            <person name="Khaldi N."/>
            <person name="Joardar V.S."/>
            <person name="Maiti R."/>
            <person name="Amedeo P."/>
            <person name="Anderson M.J."/>
            <person name="Crabtree J."/>
            <person name="Silva J.C."/>
            <person name="Badger J.H."/>
            <person name="Albarraq A."/>
            <person name="Angiuoli S."/>
            <person name="Bussey H."/>
            <person name="Bowyer P."/>
            <person name="Cotty P.J."/>
            <person name="Dyer P.S."/>
            <person name="Egan A."/>
            <person name="Galens K."/>
            <person name="Fraser-Liggett C.M."/>
            <person name="Haas B.J."/>
            <person name="Inman J.M."/>
            <person name="Kent R."/>
            <person name="Lemieux S."/>
            <person name="Malavazi I."/>
            <person name="Orvis J."/>
            <person name="Roemer T."/>
            <person name="Ronning C.M."/>
            <person name="Sundaram J.P."/>
            <person name="Sutton G."/>
            <person name="Turner G."/>
            <person name="Venter J.C."/>
            <person name="White O.R."/>
            <person name="Whitty B.R."/>
            <person name="Youngman P."/>
            <person name="Wolfe K.H."/>
            <person name="Goldman G.H."/>
            <person name="Wortman J.R."/>
            <person name="Jiang B."/>
            <person name="Denning D.W."/>
            <person name="Nierman W.C."/>
        </authorList>
    </citation>
    <scope>NUCLEOTIDE SEQUENCE [LARGE SCALE GENOMIC DNA]</scope>
    <source>
        <strain>ATCC 1020 / DSM 3700 / CBS 544.65 / FGSC A1164 / JCM 1740 / NRRL 181 / WB 181</strain>
    </source>
</reference>
<evidence type="ECO:0000250" key="1"/>
<evidence type="ECO:0000255" key="2">
    <source>
        <dbReference type="PROSITE-ProRule" id="PRU00541"/>
    </source>
</evidence>
<evidence type="ECO:0000255" key="3">
    <source>
        <dbReference type="PROSITE-ProRule" id="PRU00542"/>
    </source>
</evidence>
<evidence type="ECO:0000305" key="4"/>
<name>FAL1_NEOFI</name>
<gene>
    <name type="primary">fal1</name>
    <name type="ORF">NFIA_039670</name>
</gene>
<protein>
    <recommendedName>
        <fullName>ATP-dependent RNA helicase fal1</fullName>
        <ecNumber>3.6.4.13</ecNumber>
    </recommendedName>
</protein>
<sequence>MADGIDRRTDDRLEFSTSKEVTVAPTFEDMHLKESLLRGIYAYGYESPSAVQSRAIVQICKGRDTIAQAQSGTGKTATFSISILQVIDTVVRETQALVLSPTRELATQIQSVIMALGDYMNVQCHACIGGTNIGEDIRKLDYGQHVVSGTPGRVADMIRRRHLRTRHIKMLVLDEADELLNRGFREQIYDVYRYLPPATQVVVVSATLPYDVLDMTTKFMTDPVRVLVKRDELTLEGIKQYFIAVEKEEWKFDTLCDLYDTLTITQAVIFCNTRRKVDWLTDKMREANFTVSSMHGEMPQKERDSIMQDFRQGNSRVLISTDVWARGIDVQQVSLVINYDLPTNRENYIHRIGRSGRFGRKGVAINFVTSDDVRILRDIELYYSTQIDEMPMNVADLLS</sequence>
<organism>
    <name type="scientific">Neosartorya fischeri (strain ATCC 1020 / DSM 3700 / CBS 544.65 / FGSC A1164 / JCM 1740 / NRRL 181 / WB 181)</name>
    <name type="common">Aspergillus fischerianus</name>
    <dbReference type="NCBI Taxonomy" id="331117"/>
    <lineage>
        <taxon>Eukaryota</taxon>
        <taxon>Fungi</taxon>
        <taxon>Dikarya</taxon>
        <taxon>Ascomycota</taxon>
        <taxon>Pezizomycotina</taxon>
        <taxon>Eurotiomycetes</taxon>
        <taxon>Eurotiomycetidae</taxon>
        <taxon>Eurotiales</taxon>
        <taxon>Aspergillaceae</taxon>
        <taxon>Aspergillus</taxon>
        <taxon>Aspergillus subgen. Fumigati</taxon>
    </lineage>
</organism>
<feature type="chain" id="PRO_0000282447" description="ATP-dependent RNA helicase fal1">
    <location>
        <begin position="1"/>
        <end position="399"/>
    </location>
</feature>
<feature type="domain" description="Helicase ATP-binding" evidence="2">
    <location>
        <begin position="56"/>
        <end position="226"/>
    </location>
</feature>
<feature type="domain" description="Helicase C-terminal" evidence="3">
    <location>
        <begin position="237"/>
        <end position="398"/>
    </location>
</feature>
<feature type="short sequence motif" description="Q motif">
    <location>
        <begin position="25"/>
        <end position="53"/>
    </location>
</feature>
<feature type="short sequence motif" description="DEAD box">
    <location>
        <begin position="174"/>
        <end position="177"/>
    </location>
</feature>
<feature type="binding site" evidence="2">
    <location>
        <begin position="69"/>
        <end position="76"/>
    </location>
    <ligand>
        <name>ATP</name>
        <dbReference type="ChEBI" id="CHEBI:30616"/>
    </ligand>
</feature>
<proteinExistence type="inferred from homology"/>
<keyword id="KW-0067">ATP-binding</keyword>
<keyword id="KW-0347">Helicase</keyword>
<keyword id="KW-0378">Hydrolase</keyword>
<keyword id="KW-0547">Nucleotide-binding</keyword>
<keyword id="KW-0539">Nucleus</keyword>
<keyword id="KW-1185">Reference proteome</keyword>
<keyword id="KW-0690">Ribosome biogenesis</keyword>
<keyword id="KW-0694">RNA-binding</keyword>
<keyword id="KW-0698">rRNA processing</keyword>
<accession>A1D071</accession>
<dbReference type="EC" id="3.6.4.13"/>
<dbReference type="EMBL" id="DS027686">
    <property type="protein sequence ID" value="EAW24391.1"/>
    <property type="molecule type" value="Genomic_DNA"/>
</dbReference>
<dbReference type="RefSeq" id="XP_001266288.1">
    <property type="nucleotide sequence ID" value="XM_001266287.1"/>
</dbReference>
<dbReference type="SMR" id="A1D071"/>
<dbReference type="STRING" id="331117.A1D071"/>
<dbReference type="EnsemblFungi" id="EAW24391">
    <property type="protein sequence ID" value="EAW24391"/>
    <property type="gene ID" value="NFIA_039670"/>
</dbReference>
<dbReference type="GeneID" id="4592808"/>
<dbReference type="KEGG" id="nfi:NFIA_039670"/>
<dbReference type="VEuPathDB" id="FungiDB:NFIA_039670"/>
<dbReference type="eggNOG" id="KOG0328">
    <property type="taxonomic scope" value="Eukaryota"/>
</dbReference>
<dbReference type="HOGENOM" id="CLU_003041_1_0_1"/>
<dbReference type="OMA" id="TRFHDFK"/>
<dbReference type="OrthoDB" id="10265785at2759"/>
<dbReference type="Proteomes" id="UP000006702">
    <property type="component" value="Unassembled WGS sequence"/>
</dbReference>
<dbReference type="GO" id="GO:0030874">
    <property type="term" value="C:nucleolar chromatin"/>
    <property type="evidence" value="ECO:0007669"/>
    <property type="project" value="EnsemblFungi"/>
</dbReference>
<dbReference type="GO" id="GO:0005524">
    <property type="term" value="F:ATP binding"/>
    <property type="evidence" value="ECO:0007669"/>
    <property type="project" value="UniProtKB-KW"/>
</dbReference>
<dbReference type="GO" id="GO:0016887">
    <property type="term" value="F:ATP hydrolysis activity"/>
    <property type="evidence" value="ECO:0007669"/>
    <property type="project" value="RHEA"/>
</dbReference>
<dbReference type="GO" id="GO:0003723">
    <property type="term" value="F:RNA binding"/>
    <property type="evidence" value="ECO:0007669"/>
    <property type="project" value="UniProtKB-KW"/>
</dbReference>
<dbReference type="GO" id="GO:0003724">
    <property type="term" value="F:RNA helicase activity"/>
    <property type="evidence" value="ECO:0007669"/>
    <property type="project" value="UniProtKB-EC"/>
</dbReference>
<dbReference type="GO" id="GO:0006364">
    <property type="term" value="P:rRNA processing"/>
    <property type="evidence" value="ECO:0007669"/>
    <property type="project" value="UniProtKB-KW"/>
</dbReference>
<dbReference type="CDD" id="cd18045">
    <property type="entry name" value="DEADc_EIF4AIII_DDX48"/>
    <property type="match status" value="1"/>
</dbReference>
<dbReference type="CDD" id="cd18787">
    <property type="entry name" value="SF2_C_DEAD"/>
    <property type="match status" value="1"/>
</dbReference>
<dbReference type="FunFam" id="3.40.50.300:FF:000031">
    <property type="entry name" value="Eukaryotic initiation factor 4A-III"/>
    <property type="match status" value="1"/>
</dbReference>
<dbReference type="FunFam" id="3.40.50.300:FF:000498">
    <property type="entry name" value="Eukaryotic initiation factor 4A-III"/>
    <property type="match status" value="1"/>
</dbReference>
<dbReference type="Gene3D" id="3.40.50.300">
    <property type="entry name" value="P-loop containing nucleotide triphosphate hydrolases"/>
    <property type="match status" value="2"/>
</dbReference>
<dbReference type="InterPro" id="IPR011545">
    <property type="entry name" value="DEAD/DEAH_box_helicase_dom"/>
</dbReference>
<dbReference type="InterPro" id="IPR014001">
    <property type="entry name" value="Helicase_ATP-bd"/>
</dbReference>
<dbReference type="InterPro" id="IPR001650">
    <property type="entry name" value="Helicase_C-like"/>
</dbReference>
<dbReference type="InterPro" id="IPR027417">
    <property type="entry name" value="P-loop_NTPase"/>
</dbReference>
<dbReference type="InterPro" id="IPR000629">
    <property type="entry name" value="RNA-helicase_DEAD-box_CS"/>
</dbReference>
<dbReference type="InterPro" id="IPR014014">
    <property type="entry name" value="RNA_helicase_DEAD_Q_motif"/>
</dbReference>
<dbReference type="PANTHER" id="PTHR47958">
    <property type="entry name" value="ATP-DEPENDENT RNA HELICASE DBP3"/>
    <property type="match status" value="1"/>
</dbReference>
<dbReference type="Pfam" id="PF00270">
    <property type="entry name" value="DEAD"/>
    <property type="match status" value="1"/>
</dbReference>
<dbReference type="Pfam" id="PF00271">
    <property type="entry name" value="Helicase_C"/>
    <property type="match status" value="1"/>
</dbReference>
<dbReference type="SMART" id="SM00487">
    <property type="entry name" value="DEXDc"/>
    <property type="match status" value="1"/>
</dbReference>
<dbReference type="SMART" id="SM00490">
    <property type="entry name" value="HELICc"/>
    <property type="match status" value="1"/>
</dbReference>
<dbReference type="SUPFAM" id="SSF52540">
    <property type="entry name" value="P-loop containing nucleoside triphosphate hydrolases"/>
    <property type="match status" value="1"/>
</dbReference>
<dbReference type="PROSITE" id="PS00039">
    <property type="entry name" value="DEAD_ATP_HELICASE"/>
    <property type="match status" value="1"/>
</dbReference>
<dbReference type="PROSITE" id="PS51192">
    <property type="entry name" value="HELICASE_ATP_BIND_1"/>
    <property type="match status" value="1"/>
</dbReference>
<dbReference type="PROSITE" id="PS51194">
    <property type="entry name" value="HELICASE_CTER"/>
    <property type="match status" value="1"/>
</dbReference>
<dbReference type="PROSITE" id="PS51195">
    <property type="entry name" value="Q_MOTIF"/>
    <property type="match status" value="1"/>
</dbReference>
<comment type="function">
    <text evidence="1">ATP-dependent RNA helicase involved in 40S ribosomal subunit biogenesis. Required for the processing and cleavage of 35S pre-rRNA at sites A0, A1, and A2, leading to mature 18S rRNA (By similarity).</text>
</comment>
<comment type="catalytic activity">
    <reaction>
        <text>ATP + H2O = ADP + phosphate + H(+)</text>
        <dbReference type="Rhea" id="RHEA:13065"/>
        <dbReference type="ChEBI" id="CHEBI:15377"/>
        <dbReference type="ChEBI" id="CHEBI:15378"/>
        <dbReference type="ChEBI" id="CHEBI:30616"/>
        <dbReference type="ChEBI" id="CHEBI:43474"/>
        <dbReference type="ChEBI" id="CHEBI:456216"/>
        <dbReference type="EC" id="3.6.4.13"/>
    </reaction>
</comment>
<comment type="subcellular location">
    <subcellularLocation>
        <location evidence="1">Nucleus</location>
        <location evidence="1">Nucleolus</location>
    </subcellularLocation>
</comment>
<comment type="domain">
    <text>The Q motif is unique to and characteristic of the DEAD box family of RNA helicases and controls ATP binding and hydrolysis.</text>
</comment>
<comment type="similarity">
    <text evidence="4">Belongs to the DEAD box helicase family. DDX48/FAL1 subfamily.</text>
</comment>